<reference key="1">
    <citation type="journal article" date="2007" name="Arch. Virol.">
        <title>Comparisons of the complete genomes of two Chinese isolates of a recent foot-and-mouth disease type Asia 1 virus.</title>
        <authorList>
            <person name="Li D."/>
            <person name="Shang Y.J."/>
            <person name="Liu Z.X."/>
            <person name="Liu X.T."/>
            <person name="Cai X.P."/>
        </authorList>
    </citation>
    <scope>NUCLEOTIDE SEQUENCE [LARGE SCALE GENOMIC DNA]</scope>
    <source>
        <strain>Asia 1/Jiangsu/China/2005</strain>
    </source>
</reference>
<reference key="2">
    <citation type="journal article" date="2011" name="BMC Microbiol.">
        <title>In-vitro and in-vivo phenotype of type Asia 1 foot-and-mouth disease viruses utilizing two non-u receptor recognition sites.</title>
        <authorList>
            <person name="Li P."/>
            <person name="Lu Z."/>
            <person name="Bao H."/>
            <person name="Li D."/>
            <person name="King D.P."/>
            <person name="Sun P."/>
            <person name="Bai X."/>
            <person name="Cao W."/>
            <person name="Gubbins S."/>
            <person name="Chen Y."/>
            <person name="Xie B."/>
            <person name="Guo J."/>
            <person name="Yin H."/>
            <person name="Liu Z."/>
        </authorList>
    </citation>
    <scope>FUNCTION (CAPSID PROTEIN VP1)</scope>
    <scope>MUTAGENESIS OF GLY-867</scope>
    <source>
        <strain>Asia 1/Jiangsu/China/2005</strain>
    </source>
</reference>
<reference evidence="19" key="3">
    <citation type="journal article" date="2022" name="Cells">
        <title>The Parallel Presentation of Two Functional CTL Epitopes Derived from the O and Asia 1 Serotypes of Foot-and-Mouth Disease Virus and Swine SLA-2*HB01: Implications for Universal Vaccine Development.</title>
        <authorList>
            <person name="Feng L."/>
            <person name="Gao Y.Y."/>
            <person name="Sun M."/>
            <person name="Li Z.B."/>
            <person name="Zhang Q."/>
            <person name="Yang J."/>
            <person name="Qiao C."/>
            <person name="Jin H."/>
            <person name="Feng H.S."/>
            <person name="Xian Y.H."/>
            <person name="Qi J."/>
            <person name="Gao G.F."/>
            <person name="Liu W.J."/>
            <person name="Gao F.S."/>
        </authorList>
    </citation>
    <scope>X-RAY CRYSTALLOGRAPHY (2.40 ANGSTROMS) OF 787-795</scope>
</reference>
<evidence type="ECO:0000250" key="1"/>
<evidence type="ECO:0000250" key="2">
    <source>
        <dbReference type="UniProtKB" id="P03300"/>
    </source>
</evidence>
<evidence type="ECO:0000250" key="3">
    <source>
        <dbReference type="UniProtKB" id="P03303"/>
    </source>
</evidence>
<evidence type="ECO:0000250" key="4">
    <source>
        <dbReference type="UniProtKB" id="P03305"/>
    </source>
</evidence>
<evidence type="ECO:0000250" key="5">
    <source>
        <dbReference type="UniProtKB" id="P03306"/>
    </source>
</evidence>
<evidence type="ECO:0000250" key="6">
    <source>
        <dbReference type="UniProtKB" id="P03308"/>
    </source>
</evidence>
<evidence type="ECO:0000250" key="7">
    <source>
        <dbReference type="UniProtKB" id="P03311"/>
    </source>
</evidence>
<evidence type="ECO:0000250" key="8">
    <source>
        <dbReference type="UniProtKB" id="P12296"/>
    </source>
</evidence>
<evidence type="ECO:0000255" key="9"/>
<evidence type="ECO:0000255" key="10">
    <source>
        <dbReference type="PROSITE-ProRule" id="PRU00539"/>
    </source>
</evidence>
<evidence type="ECO:0000255" key="11">
    <source>
        <dbReference type="PROSITE-ProRule" id="PRU00551"/>
    </source>
</evidence>
<evidence type="ECO:0000255" key="12">
    <source>
        <dbReference type="PROSITE-ProRule" id="PRU01222"/>
    </source>
</evidence>
<evidence type="ECO:0000255" key="13">
    <source>
        <dbReference type="PROSITE-ProRule" id="PRU01235"/>
    </source>
</evidence>
<evidence type="ECO:0000256" key="14">
    <source>
        <dbReference type="SAM" id="MobiDB-lite"/>
    </source>
</evidence>
<evidence type="ECO:0000269" key="15">
    <source>
    </source>
</evidence>
<evidence type="ECO:0000269" key="16">
    <source>
    </source>
</evidence>
<evidence type="ECO:0000305" key="17"/>
<evidence type="ECO:0000305" key="18">
    <source>
    </source>
</evidence>
<evidence type="ECO:0007744" key="19">
    <source>
        <dbReference type="PDB" id="8GQV"/>
    </source>
</evidence>
<feature type="chain" id="PRO_0000460518" description="Genome polyprotein">
    <location>
        <begin position="1"/>
        <end position="2329"/>
    </location>
</feature>
<feature type="chain" id="PRO_0000460519" description="Leader protease">
    <location>
        <begin position="1"/>
        <end position="201"/>
    </location>
</feature>
<feature type="chain" id="PRO_0000460520" description="Capsid protein VP0">
    <location>
        <begin position="202"/>
        <end position="504"/>
    </location>
</feature>
<feature type="chain" id="PRO_0000460521" description="Capsid protein VP4">
    <location>
        <begin position="202"/>
        <end position="286"/>
    </location>
</feature>
<feature type="chain" id="PRO_0000460522" description="Capsid protein VP2">
    <location>
        <begin position="287"/>
        <end position="504"/>
    </location>
</feature>
<feature type="chain" id="PRO_0000460523" description="Capsid protein VP3">
    <location>
        <begin position="505"/>
        <end position="723"/>
    </location>
</feature>
<feature type="chain" id="PRO_0000460524" description="Capsid protein VP1">
    <location>
        <begin position="724"/>
        <end position="932"/>
    </location>
</feature>
<feature type="chain" id="PRO_0000460525" description="Protein 2A">
    <location>
        <begin position="933"/>
        <end position="950"/>
    </location>
</feature>
<feature type="chain" id="PRO_0000460526" description="Protein 2B">
    <location>
        <begin position="951"/>
        <end position="1104"/>
    </location>
</feature>
<feature type="chain" id="PRO_0000460527" description="Protein 2C">
    <location>
        <begin position="1105"/>
        <end position="1422"/>
    </location>
</feature>
<feature type="chain" id="PRO_0000460528" description="Protein 3A">
    <location>
        <begin position="1423"/>
        <end position="1575"/>
    </location>
</feature>
<feature type="chain" id="PRO_0000460529" description="Protein 3B-1">
    <location>
        <begin position="1576"/>
        <end position="1598"/>
    </location>
</feature>
<feature type="chain" id="PRO_0000460530" description="Protein 3B-2">
    <location>
        <begin position="1599"/>
        <end position="1622"/>
    </location>
</feature>
<feature type="chain" id="PRO_0000460531" description="Protein 3B-3">
    <location>
        <begin position="1623"/>
        <end position="1646"/>
    </location>
</feature>
<feature type="chain" id="PRO_0000460532" description="Protease 3C">
    <location>
        <begin position="1647"/>
        <end position="1859"/>
    </location>
</feature>
<feature type="chain" id="PRO_0000460533" description="RNA-directed RNA polymerase 3D-POL">
    <location>
        <begin position="1860"/>
        <end position="2329"/>
    </location>
</feature>
<feature type="intramembrane region" evidence="9">
    <location>
        <begin position="1478"/>
        <end position="1498"/>
    </location>
</feature>
<feature type="domain" description="Peptidase C28" evidence="13">
    <location>
        <begin position="29"/>
        <end position="182"/>
    </location>
</feature>
<feature type="domain" description="SF3 helicase" evidence="11">
    <location>
        <begin position="1186"/>
        <end position="1350"/>
    </location>
</feature>
<feature type="domain" description="Peptidase C3" evidence="12">
    <location>
        <begin position="1649"/>
        <end position="1845"/>
    </location>
</feature>
<feature type="domain" description="RdRp catalytic" evidence="10">
    <location>
        <begin position="2093"/>
        <end position="2211"/>
    </location>
</feature>
<feature type="region of interest" description="Disordered" evidence="14">
    <location>
        <begin position="197"/>
        <end position="218"/>
    </location>
</feature>
<feature type="region of interest" description="Disordered" evidence="14">
    <location>
        <begin position="238"/>
        <end position="264"/>
    </location>
</feature>
<feature type="region of interest" description="Antigenic epitope" evidence="16">
    <location>
        <begin position="787"/>
        <end position="795"/>
    </location>
</feature>
<feature type="region of interest" description="Disordered" evidence="14">
    <location>
        <begin position="1526"/>
        <end position="1577"/>
    </location>
</feature>
<feature type="short sequence motif" description="Cell attachment site" evidence="15">
    <location>
        <begin position="866"/>
        <end position="868"/>
    </location>
</feature>
<feature type="short sequence motif" description="Nuclear localization signal" evidence="7">
    <location>
        <begin position="1875"/>
        <end position="1883"/>
    </location>
</feature>
<feature type="short sequence motif" description="Nuclear localization signal" evidence="4">
    <location>
        <begin position="1876"/>
        <end position="1883"/>
    </location>
</feature>
<feature type="compositionally biased region" description="Polar residues" evidence="14">
    <location>
        <begin position="204"/>
        <end position="218"/>
    </location>
</feature>
<feature type="compositionally biased region" description="Polar residues" evidence="14">
    <location>
        <begin position="238"/>
        <end position="251"/>
    </location>
</feature>
<feature type="compositionally biased region" description="Low complexity" evidence="14">
    <location>
        <begin position="252"/>
        <end position="264"/>
    </location>
</feature>
<feature type="compositionally biased region" description="Basic and acidic residues" evidence="14">
    <location>
        <begin position="1526"/>
        <end position="1535"/>
    </location>
</feature>
<feature type="compositionally biased region" description="Basic and acidic residues" evidence="14">
    <location>
        <begin position="1546"/>
        <end position="1558"/>
    </location>
</feature>
<feature type="active site" description="For leader protease activity" evidence="13">
    <location>
        <position position="51"/>
    </location>
</feature>
<feature type="active site" description="For leader protease activity" evidence="13">
    <location>
        <position position="148"/>
    </location>
</feature>
<feature type="active site" description="For leader protease activity" evidence="13">
    <location>
        <position position="163"/>
    </location>
</feature>
<feature type="active site" description="For protease 3C activity; Proton donor/acceptor" evidence="12">
    <location>
        <position position="1692"/>
    </location>
</feature>
<feature type="active site" description="For protease 3C activity" evidence="12">
    <location>
        <position position="1730"/>
    </location>
</feature>
<feature type="active site" description="For protease 3C activity" evidence="12">
    <location>
        <position position="1809"/>
    </location>
</feature>
<feature type="active site" description="For RdRp activity" evidence="8">
    <location>
        <position position="2197"/>
    </location>
</feature>
<feature type="binding site" evidence="11">
    <location>
        <begin position="1214"/>
        <end position="1221"/>
    </location>
    <ligand>
        <name>ATP</name>
        <dbReference type="ChEBI" id="CHEBI:30616"/>
    </ligand>
</feature>
<feature type="site" description="Cleavage; by leader protease" evidence="9">
    <location>
        <begin position="201"/>
        <end position="202"/>
    </location>
</feature>
<feature type="site" description="Cleavage" evidence="9">
    <location>
        <begin position="286"/>
        <end position="287"/>
    </location>
</feature>
<feature type="site" description="Cleavage; by picornain 3C" evidence="9">
    <location>
        <begin position="504"/>
        <end position="505"/>
    </location>
</feature>
<feature type="site" description="Cleavage; by picornain 3C" evidence="9">
    <location>
        <begin position="723"/>
        <end position="724"/>
    </location>
</feature>
<feature type="site" description="Cleavage; by picornain 3C" evidence="9">
    <location>
        <begin position="932"/>
        <end position="933"/>
    </location>
</feature>
<feature type="site" description="Cleavage; by ribosomal skip" evidence="9">
    <location>
        <begin position="950"/>
        <end position="951"/>
    </location>
</feature>
<feature type="site" description="Cleavage; by picornain 3C" evidence="9">
    <location>
        <begin position="1104"/>
        <end position="1105"/>
    </location>
</feature>
<feature type="site" description="Cleavage; by picornain 3C" evidence="9">
    <location>
        <begin position="1422"/>
        <end position="1423"/>
    </location>
</feature>
<feature type="site" description="Cleavage; by picornain 3C" evidence="9">
    <location>
        <begin position="1575"/>
        <end position="1576"/>
    </location>
</feature>
<feature type="site" description="Cleavage; by picornain 3C" evidence="9">
    <location>
        <begin position="1598"/>
        <end position="1599"/>
    </location>
</feature>
<feature type="site" description="Cleavage; by picornain 3C" evidence="9">
    <location>
        <begin position="1622"/>
        <end position="1623"/>
    </location>
</feature>
<feature type="site" description="Cleavage; by picornain 3C" evidence="9">
    <location>
        <begin position="1646"/>
        <end position="1647"/>
    </location>
</feature>
<feature type="site" description="Cleavage; by picornain 3C" evidence="9">
    <location>
        <begin position="1859"/>
        <end position="1860"/>
    </location>
</feature>
<feature type="modified residue" description="O-(5'-phospho-RNA)-tyrosine" evidence="4">
    <location>
        <position position="1578"/>
    </location>
</feature>
<feature type="modified residue" description="O-(5'-phospho-RNA)-tyrosine" evidence="4">
    <location>
        <position position="1601"/>
    </location>
</feature>
<feature type="modified residue" description="O-(5'-phospho-RNA)-tyrosine" evidence="4">
    <location>
        <position position="1625"/>
    </location>
</feature>
<feature type="lipid moiety-binding region" description="N-myristoyl glycine; by host" evidence="7">
    <location>
        <position position="202"/>
    </location>
</feature>
<feature type="disulfide bond" description="Interchain; in VP3 dimer" evidence="4">
    <location>
        <position position="511"/>
    </location>
</feature>
<feature type="mutagenesis site" description="No effect on replication in vitro and in vivo." evidence="15">
    <original>G</original>
    <variation>D</variation>
    <variation>S</variation>
    <location>
        <position position="867"/>
    </location>
</feature>
<name>POLG_FMDA1</name>
<sequence>MNTTDCFVALIHIFREIKALFLSRTQGKMEFTLHNGEKKTFYSRPNNHDNCWLNTILQLFRYVDEPFFDWVYDSPENLTLEAIKQLEEVTGLELHEGGPPALVIWNIKHLLHTGVGTASRPSEVCMVDGTDMCLADSHAGIFLKGQEHAVFACVTSNGWYAIDDEDFYPWTPDPSDVLVFVPYDQEPLNGEWKAKVQKRLKGAGQSSPATGSQNQSGNTGSIINNYYMQQYQNSMDTQLGDNAISGGSNEGSTDTTSTHTNNTQNNDWFSRLASSAFSGLFGALLADKKTEETTLLEDRILTTRNGHTTSTTQSSVGVTYGYAVAEDAVSGPNTSGLETRVTQAERFFKKHLFDWTPDLSFGHCHYLELPSEHKGVFGSLMSSYAYMRNGWDIEVTAVGNQFNGGCLLVALVPELKELDTRQKYQLTLFPHQFINPRTNMTAHINVPYVGVNRYDQYELHKPWTLVVMVVAPLTVKTGGSEQIKVYMNAAPTYVHVAGELPSKEGIVPVACVDGYGNMVTTDPKTADPVYGKVSNPPRTSFPGRFTNFLDVAEACPTFLRFGEVPFVKTVNSGDRLLAKFDVSLAAGHMSNTYLAGLAQYYTQYSGTMNIHFMFTGPTDAKARYMVAYIPPGMTPPTDPERAAHCIHSEWDTGLNSKFTFSIPYLSAADYAYTASDVAETTSVQGWVCIYQITHGKAEGDALVVSVSAGKDFEFRLPVDARQQTTTTGESADPVTTTVENYGGETQTARRLHTDVAFVLDRFVKLTQPKSTQTLDLMQIPSHTLVGALLRSATYYFSDLEVALVHTGPVTWVPNGAPKTALNNHTNPTAYQKQPITRLALPYTAPHRVLSTVYNGKTTYGEESSRRGDLAALARRVNNRLPTSFNYGAVKADTITELLIRMKRAETYCPRPLLALDTTQDRRKQKIIAPEKQTLNFDLLKLAGDVESNPGPFFFSDVRSNFTKLVDTINQMQEDMSTKHGPDFNRLVSAFEELATGVKAIRTGLDEAKPWYKLIKLLSRLSCMAAVAARSKDPVLVAIMLADTGLEILDSTFVVKKISDSLSSLFHVPAPVFSFGAPVLLAGLVKVASSFFRSTPEEPERAEKQLKARDINDIFAILKNGEWLVKLILAIRDWIKAWIAPEEKFVTMTDLVPGILEKQPDLNGPSKYKEAKEWLDNARQACLKSGNVHIANLCKVVAPAPSKSRPEPVVVCLRGKSGQGKSFLADVLAQAISTHYTGRIDSVWYCPPDLDHFDGYNQQTVVVMDDLGQNPDGKDFKYFAQMVSTTGFIPPMASLEDKGKPFNSKVIIATTNLYSGFTPRTMVCPDALNRRFHFDIDVSAKDGYKINNKLDIIKALEDTHTNPVAMFQYDCALLNGMAVEMKRMQQDMFKPQPPLQNVYQLVQEVIDRVELHEKVSSHPIFKQISIPSQKSVLYFLIEKGQHEAAIEFFEGMVHDSIKEELRPLIQQTSFVKRAFKRLKENFEIVALCLTLLANIVIMIRETRKRQQMVNDAVNEYIDKANITTDDKTLDEAEKNPLETSGASTVGFRERTLPGRKTSDDVNSEPVKSVEEQPQAEGPYAGAFERQKTLKVRAKLPQQEGPYAGPMERQKPLKVKAKAPVVKEGPYEGPVKKPVALKVKAKNLIVTESGAPPTDLQKMVMGNTKPVELILDGKTVAICCATGVFGTAYLVPRHLFAEKYDKIMLDGRAMTDSDYRVFEFEIKVKGQNMLSDAALMVLHRGNRVRDITKHFRDVAKMKKGTPVVGVINNADVGRLIFSGEALTYKDIVVCMDGDTMPGLFAYKAVTRAGYCGGAVLAKDGAETFIVGTHSAGGNGVGYCSCVSRSMLLKMKAHIDPEPHHEGLIVDTRDVEERVHVMRKTKLAPTVAHGVFNPEFGPAALSNKDPRLNEGVVLDEVIFSKHKGDTKMSEEDKALFRRCAADYASRLHSVLGTANAPLSIYEAIKGVDGLDAMEPDTAPGLPWALQGKRRGALIDFENGTVGPEVEAALKLMEKREYKFACQTFLKDEIRPMEKVRAGKTRIVDVLPVEHILYTRMMIGRFCAQMHSNNGPQIGSAVGCNPDVDWQRFGTHFAQYRNVWDVDYSAFDANHCSDAMNIMFEEVFRTEFGFHPNAEWILKTLVNTEHAYENKRIVVEGGMPSGCSATSIINTILNNIYVLYALRRHYEGVELDTYTMISYGDDIVVASDYDLDFEALKPHFKSLGQTITPADKSDKGFVLGHSITDVTFLKRHFHMDYGTGFYKPVMASKTLEAILSFARRGTIQEKLISVAGLAVHSGPDEYRRLFEPFQGLFEIPSYRSLYLRWVNAVCGDA</sequence>
<keyword id="KW-0002">3D-structure</keyword>
<keyword id="KW-0067">ATP-binding</keyword>
<keyword id="KW-0167">Capsid protein</keyword>
<keyword id="KW-1165">Clathrin-mediated endocytosis of virus by host</keyword>
<keyword id="KW-0191">Covalent protein-RNA linkage</keyword>
<keyword id="KW-1015">Disulfide bond</keyword>
<keyword id="KW-0347">Helicase</keyword>
<keyword id="KW-1035">Host cytoplasm</keyword>
<keyword id="KW-1036">Host cytoplasmic vesicle</keyword>
<keyword id="KW-1038">Host endoplasmic reticulum</keyword>
<keyword id="KW-1043">Host membrane</keyword>
<keyword id="KW-1048">Host nucleus</keyword>
<keyword id="KW-0945">Host-virus interaction</keyword>
<keyword id="KW-0378">Hydrolase</keyword>
<keyword id="KW-0407">Ion channel</keyword>
<keyword id="KW-0406">Ion transport</keyword>
<keyword id="KW-0449">Lipoprotein</keyword>
<keyword id="KW-0472">Membrane</keyword>
<keyword id="KW-1122">Modulation of host chromatin by virus</keyword>
<keyword id="KW-0519">Myristate</keyword>
<keyword id="KW-0547">Nucleotide-binding</keyword>
<keyword id="KW-0548">Nucleotidyltransferase</keyword>
<keyword id="KW-0597">Phosphoprotein</keyword>
<keyword id="KW-0645">Protease</keyword>
<keyword id="KW-0696">RNA-directed RNA polymerase</keyword>
<keyword id="KW-1143">T=pseudo3 icosahedral capsid protein</keyword>
<keyword id="KW-0788">Thiol protease</keyword>
<keyword id="KW-0808">Transferase</keyword>
<keyword id="KW-0810">Translation regulation</keyword>
<keyword id="KW-0813">Transport</keyword>
<keyword id="KW-1161">Viral attachment to host cell</keyword>
<keyword id="KW-1182">Viral ion channel</keyword>
<keyword id="KW-1162">Viral penetration into host cytoplasm</keyword>
<keyword id="KW-0693">Viral RNA replication</keyword>
<keyword id="KW-0946">Virion</keyword>
<keyword id="KW-1164">Virus endocytosis by host</keyword>
<keyword id="KW-1160">Virus entry into host cell</keyword>
<dbReference type="EC" id="3.4.22.46" evidence="4"/>
<dbReference type="EC" id="3.6.1.15" evidence="4"/>
<dbReference type="EC" id="3.4.22.28" evidence="12"/>
<dbReference type="EC" id="2.7.7.48" evidence="10"/>
<dbReference type="EMBL" id="EF149009">
    <property type="protein sequence ID" value="ABM66095.1"/>
    <property type="molecule type" value="Genomic_RNA"/>
</dbReference>
<dbReference type="PDB" id="8GQV">
    <property type="method" value="X-ray"/>
    <property type="resolution" value="2.40 A"/>
    <property type="chains" value="C/F=787-795"/>
</dbReference>
<dbReference type="PDBsum" id="8GQV"/>
<dbReference type="SMR" id="A2I7M2"/>
<dbReference type="MEROPS" id="C28.001"/>
<dbReference type="Proteomes" id="UP000108342">
    <property type="component" value="Genome"/>
</dbReference>
<dbReference type="GO" id="GO:0044162">
    <property type="term" value="C:host cell cytoplasmic vesicle membrane"/>
    <property type="evidence" value="ECO:0007669"/>
    <property type="project" value="UniProtKB-SubCell"/>
</dbReference>
<dbReference type="GO" id="GO:0044167">
    <property type="term" value="C:host cell endoplasmic reticulum membrane"/>
    <property type="evidence" value="ECO:0007669"/>
    <property type="project" value="UniProtKB-SubCell"/>
</dbReference>
<dbReference type="GO" id="GO:0042025">
    <property type="term" value="C:host cell nucleus"/>
    <property type="evidence" value="ECO:0007669"/>
    <property type="project" value="UniProtKB-SubCell"/>
</dbReference>
<dbReference type="GO" id="GO:0016020">
    <property type="term" value="C:membrane"/>
    <property type="evidence" value="ECO:0007669"/>
    <property type="project" value="UniProtKB-KW"/>
</dbReference>
<dbReference type="GO" id="GO:0039618">
    <property type="term" value="C:T=pseudo3 icosahedral viral capsid"/>
    <property type="evidence" value="ECO:0007669"/>
    <property type="project" value="UniProtKB-KW"/>
</dbReference>
<dbReference type="GO" id="GO:0005524">
    <property type="term" value="F:ATP binding"/>
    <property type="evidence" value="ECO:0007669"/>
    <property type="project" value="UniProtKB-KW"/>
</dbReference>
<dbReference type="GO" id="GO:0015267">
    <property type="term" value="F:channel activity"/>
    <property type="evidence" value="ECO:0007669"/>
    <property type="project" value="UniProtKB-KW"/>
</dbReference>
<dbReference type="GO" id="GO:0004197">
    <property type="term" value="F:cysteine-type endopeptidase activity"/>
    <property type="evidence" value="ECO:0007669"/>
    <property type="project" value="UniProtKB-EC"/>
</dbReference>
<dbReference type="GO" id="GO:0017111">
    <property type="term" value="F:ribonucleoside triphosphate phosphatase activity"/>
    <property type="evidence" value="ECO:0007669"/>
    <property type="project" value="UniProtKB-EC"/>
</dbReference>
<dbReference type="GO" id="GO:0003723">
    <property type="term" value="F:RNA binding"/>
    <property type="evidence" value="ECO:0007669"/>
    <property type="project" value="InterPro"/>
</dbReference>
<dbReference type="GO" id="GO:0003724">
    <property type="term" value="F:RNA helicase activity"/>
    <property type="evidence" value="ECO:0007669"/>
    <property type="project" value="InterPro"/>
</dbReference>
<dbReference type="GO" id="GO:0003968">
    <property type="term" value="F:RNA-directed RNA polymerase activity"/>
    <property type="evidence" value="ECO:0007669"/>
    <property type="project" value="UniProtKB-KW"/>
</dbReference>
<dbReference type="GO" id="GO:0005198">
    <property type="term" value="F:structural molecule activity"/>
    <property type="evidence" value="ECO:0007669"/>
    <property type="project" value="InterPro"/>
</dbReference>
<dbReference type="GO" id="GO:0075512">
    <property type="term" value="P:clathrin-dependent endocytosis of virus by host cell"/>
    <property type="evidence" value="ECO:0007669"/>
    <property type="project" value="UniProtKB-KW"/>
</dbReference>
<dbReference type="GO" id="GO:0006351">
    <property type="term" value="P:DNA-templated transcription"/>
    <property type="evidence" value="ECO:0007669"/>
    <property type="project" value="InterPro"/>
</dbReference>
<dbReference type="GO" id="GO:0034220">
    <property type="term" value="P:monoatomic ion transmembrane transport"/>
    <property type="evidence" value="ECO:0007669"/>
    <property type="project" value="UniProtKB-KW"/>
</dbReference>
<dbReference type="GO" id="GO:0006508">
    <property type="term" value="P:proteolysis"/>
    <property type="evidence" value="ECO:0007669"/>
    <property type="project" value="UniProtKB-KW"/>
</dbReference>
<dbReference type="GO" id="GO:0006417">
    <property type="term" value="P:regulation of translation"/>
    <property type="evidence" value="ECO:0007669"/>
    <property type="project" value="UniProtKB-KW"/>
</dbReference>
<dbReference type="GO" id="GO:0039525">
    <property type="term" value="P:symbiont-mediated perturbation of host chromatin organization"/>
    <property type="evidence" value="ECO:0007669"/>
    <property type="project" value="UniProtKB-KW"/>
</dbReference>
<dbReference type="GO" id="GO:0019082">
    <property type="term" value="P:viral protein processing"/>
    <property type="evidence" value="ECO:0007669"/>
    <property type="project" value="InterPro"/>
</dbReference>
<dbReference type="GO" id="GO:0039694">
    <property type="term" value="P:viral RNA genome replication"/>
    <property type="evidence" value="ECO:0007669"/>
    <property type="project" value="InterPro"/>
</dbReference>
<dbReference type="GO" id="GO:0019062">
    <property type="term" value="P:virion attachment to host cell"/>
    <property type="evidence" value="ECO:0007669"/>
    <property type="project" value="UniProtKB-KW"/>
</dbReference>
<dbReference type="CDD" id="cd23210">
    <property type="entry name" value="Aphthovirus_RdRp"/>
    <property type="match status" value="1"/>
</dbReference>
<dbReference type="CDD" id="cd00205">
    <property type="entry name" value="rhv_like"/>
    <property type="match status" value="3"/>
</dbReference>
<dbReference type="FunFam" id="1.20.960.20:FF:000002">
    <property type="entry name" value="Genome polyprotein"/>
    <property type="match status" value="1"/>
</dbReference>
<dbReference type="FunFam" id="2.40.10.10:FF:000108">
    <property type="entry name" value="Genome polyprotein"/>
    <property type="match status" value="1"/>
</dbReference>
<dbReference type="FunFam" id="3.30.70.270:FF:000031">
    <property type="entry name" value="Genome polyprotein"/>
    <property type="match status" value="1"/>
</dbReference>
<dbReference type="Gene3D" id="1.20.960.20">
    <property type="match status" value="1"/>
</dbReference>
<dbReference type="Gene3D" id="2.60.120.20">
    <property type="match status" value="3"/>
</dbReference>
<dbReference type="Gene3D" id="3.30.70.270">
    <property type="match status" value="2"/>
</dbReference>
<dbReference type="Gene3D" id="4.10.90.10">
    <property type="entry name" value="Capsid protein VP4 superfamily, Picornavirus"/>
    <property type="match status" value="1"/>
</dbReference>
<dbReference type="Gene3D" id="3.90.70.10">
    <property type="entry name" value="Cysteine proteinases"/>
    <property type="match status" value="1"/>
</dbReference>
<dbReference type="Gene3D" id="2.40.10.10">
    <property type="entry name" value="Trypsin-like serine proteases"/>
    <property type="match status" value="2"/>
</dbReference>
<dbReference type="InterPro" id="IPR015031">
    <property type="entry name" value="Capsid_VP4_Picornavir"/>
</dbReference>
<dbReference type="InterPro" id="IPR037080">
    <property type="entry name" value="Capsid_VP4_sf_Picornavirus"/>
</dbReference>
<dbReference type="InterPro" id="IPR043502">
    <property type="entry name" value="DNA/RNA_pol_sf"/>
</dbReference>
<dbReference type="InterPro" id="IPR004080">
    <property type="entry name" value="FMDV_VP1_coat"/>
</dbReference>
<dbReference type="InterPro" id="IPR004004">
    <property type="entry name" value="Helic/Pol/Pept_Calicivir-typ"/>
</dbReference>
<dbReference type="InterPro" id="IPR000605">
    <property type="entry name" value="Helicase_SF3_ssDNA/RNA_vir"/>
</dbReference>
<dbReference type="InterPro" id="IPR014759">
    <property type="entry name" value="Helicase_SF3_ssRNA_vir"/>
</dbReference>
<dbReference type="InterPro" id="IPR027417">
    <property type="entry name" value="P-loop_NTPase"/>
</dbReference>
<dbReference type="InterPro" id="IPR038765">
    <property type="entry name" value="Papain-like_cys_pep_sf"/>
</dbReference>
<dbReference type="InterPro" id="IPR044067">
    <property type="entry name" value="PCV_3C_PRO"/>
</dbReference>
<dbReference type="InterPro" id="IPR008739">
    <property type="entry name" value="Peptidase_C28"/>
</dbReference>
<dbReference type="InterPro" id="IPR000199">
    <property type="entry name" value="Peptidase_C3A/C3B_picornavir"/>
</dbReference>
<dbReference type="InterPro" id="IPR009003">
    <property type="entry name" value="Peptidase_S1_PA"/>
</dbReference>
<dbReference type="InterPro" id="IPR043504">
    <property type="entry name" value="Peptidase_S1_PA_chymotrypsin"/>
</dbReference>
<dbReference type="InterPro" id="IPR001676">
    <property type="entry name" value="Picornavirus_capsid"/>
</dbReference>
<dbReference type="InterPro" id="IPR043128">
    <property type="entry name" value="Rev_trsase/Diguanyl_cyclase"/>
</dbReference>
<dbReference type="InterPro" id="IPR033703">
    <property type="entry name" value="Rhv-like"/>
</dbReference>
<dbReference type="InterPro" id="IPR001205">
    <property type="entry name" value="RNA-dir_pol_C"/>
</dbReference>
<dbReference type="InterPro" id="IPR007094">
    <property type="entry name" value="RNA-dir_pol_PSvirus"/>
</dbReference>
<dbReference type="InterPro" id="IPR029053">
    <property type="entry name" value="Viral_coat"/>
</dbReference>
<dbReference type="Pfam" id="PF05408">
    <property type="entry name" value="Peptidase_C28"/>
    <property type="match status" value="1"/>
</dbReference>
<dbReference type="Pfam" id="PF00548">
    <property type="entry name" value="Peptidase_C3"/>
    <property type="match status" value="1"/>
</dbReference>
<dbReference type="Pfam" id="PF00680">
    <property type="entry name" value="RdRP_1"/>
    <property type="match status" value="1"/>
</dbReference>
<dbReference type="Pfam" id="PF00073">
    <property type="entry name" value="Rhv"/>
    <property type="match status" value="2"/>
</dbReference>
<dbReference type="Pfam" id="PF22663">
    <property type="entry name" value="Rhv_5"/>
    <property type="match status" value="1"/>
</dbReference>
<dbReference type="Pfam" id="PF00910">
    <property type="entry name" value="RNA_helicase"/>
    <property type="match status" value="1"/>
</dbReference>
<dbReference type="Pfam" id="PF08935">
    <property type="entry name" value="VP4_2"/>
    <property type="match status" value="1"/>
</dbReference>
<dbReference type="PRINTS" id="PR00918">
    <property type="entry name" value="CALICVIRUSNS"/>
</dbReference>
<dbReference type="PRINTS" id="PR01542">
    <property type="entry name" value="FMDVP1COAT"/>
</dbReference>
<dbReference type="SUPFAM" id="SSF54001">
    <property type="entry name" value="Cysteine proteinases"/>
    <property type="match status" value="1"/>
</dbReference>
<dbReference type="SUPFAM" id="SSF56672">
    <property type="entry name" value="DNA/RNA polymerases"/>
    <property type="match status" value="1"/>
</dbReference>
<dbReference type="SUPFAM" id="SSF52540">
    <property type="entry name" value="P-loop containing nucleoside triphosphate hydrolases"/>
    <property type="match status" value="1"/>
</dbReference>
<dbReference type="SUPFAM" id="SSF88633">
    <property type="entry name" value="Positive stranded ssRNA viruses"/>
    <property type="match status" value="2"/>
</dbReference>
<dbReference type="SUPFAM" id="SSF50494">
    <property type="entry name" value="Trypsin-like serine proteases"/>
    <property type="match status" value="1"/>
</dbReference>
<dbReference type="PROSITE" id="PS51887">
    <property type="entry name" value="APHTHOVIRUS_LPRO"/>
    <property type="match status" value="1"/>
</dbReference>
<dbReference type="PROSITE" id="PS51874">
    <property type="entry name" value="PCV_3C_PRO"/>
    <property type="match status" value="1"/>
</dbReference>
<dbReference type="PROSITE" id="PS50507">
    <property type="entry name" value="RDRP_SSRNA_POS"/>
    <property type="match status" value="1"/>
</dbReference>
<dbReference type="PROSITE" id="PS51218">
    <property type="entry name" value="SF3_HELICASE_2"/>
    <property type="match status" value="1"/>
</dbReference>
<comment type="function">
    <molecule>Leader protease</molecule>
    <text evidence="4 6">Autocatalytically cleaves itself from the polyprotein at the L/VP0 junction. Also cleaves the host translation initiation factors EIF4G1 and EIF4G3, in order to shut off the capped cellular mRNA transcription. Plays a role in counteracting host innate antiviral response using diverse mechanisms. Possesses a deubiquitinase activity acting on both 'Lys-48' and 'Lys-63'-linked polyubiquitin chains. In turn, inhibits the ubiquitination and subsequent activation of key signaling molecules of type I IFN response such as host RIGI, TBK1, TRAF3 and TRAF6. Inhibits host NF-kappa-B activity by inducing a decrease in RELA mRNA levels. Cleaves a peptide bond in the C-terminus of host ISG15, resulting in the damaging of this modifier that can no longer be attached to target proteins. Also cleaves host G3BP1 and G3BP2 in order to inhibit cytoplasmic stress granules assembly.</text>
</comment>
<comment type="function">
    <molecule>Capsid protein VP4</molecule>
    <text evidence="2">Lies on the inner surface of the capsid shell. After binding to the host receptor, the capsid undergoes conformational changes. Capsid protein VP4 is released, capsid protein VP1 N-terminus is externalized, and together, they shape a pore in the host membrane through which the viral genome is translocated into the host cell cytoplasm. After genome has been released, the channel shrinks.</text>
</comment>
<comment type="function">
    <molecule>Capsid protein VP2</molecule>
    <text evidence="4 5">Forms an icosahedral capsid of pseudo T=3 symmetry with capsid proteins VP1 and VP3. The capsid is composed of 60 copies of each capsid protein organized in the form of twelve pentamers and encloses the viral positive strand RNA genome (By similarity). Upon acidifcation in the endosome, dissociates into pentamers (By similarity).</text>
</comment>
<comment type="function">
    <molecule>Capsid protein VP3</molecule>
    <text evidence="4 5">Forms an icosahedral capsid of pseudo T=3 symmetry with capsid proteins VP0 and VP3. The capsid is composed of 60 copies of each capsid protein organized in the form of twelve pentamers and encloses the viral positive strand RNA genome (By similarity). Upon acidifcation in the endosome, dissociates into pentamers (By similarity).</text>
</comment>
<comment type="function">
    <molecule>Capsid protein VP1</molecule>
    <text evidence="4 5 18">Forms an icosahedral capsid of pseudo T=3 symmetry with capsid proteins VP2 and VP3. The capsid is composed of 60 copies of each capsid protein organized in the form of twelve pentamers and encloses the viral positive strand RNA genome. Mediates cell entry by attachment to an integrin receptor, usually host ITGAV/ITGB6 (Probable). In addition, targets host MAVS to suppress type I IFN pathway (By similarity). Upon acidifcation in the endosome, dissociates into pentamers (By similarity).</text>
</comment>
<comment type="function">
    <molecule>Protein 2A</molecule>
    <text evidence="4">Mediates self-processing of the polyprotein by a translational effect termed 'ribosome skipping'. Mechanistically, 2A-mediated cleavage occurs between the C-terminal glycine and the proline of the downstream protein 2B. In the case of foot-and-mouth disease virus, the 2A oligopeptide is post-translationally 'trimmed' from the C-terminus of the upstream protein 1D by 3C proteinase.</text>
</comment>
<comment type="function">
    <molecule>Protein 2B</molecule>
    <text evidence="4">Plays an essential role in the virus replication cycle by acting as a viroporin. Creates a pore in the host endoplasmic reticulum and as a consequence releases Ca2+ in the cytoplasm of infected cell. In turn, high levels of cytoplasmic calcium may trigger membrane trafficking and transport of viral ER-associated proteins to viroplasms, sites of viral genome replication.</text>
</comment>
<comment type="function">
    <molecule>Protein 2C</molecule>
    <text evidence="4">Associates with and induces structural rearrangements of intracellular membranes. Triggers host autophagy by interacting with host BECN1 and thereby promotes viral replication. Participates in viral replication and interacts with host DHX9. Displays RNA-binding, nucleotide binding and NTPase activities. May play a role in virion morphogenesis and viral RNA encapsidation by interacting with the capsid protein VP3.</text>
</comment>
<comment type="function">
    <molecule>Protein 3A</molecule>
    <text evidence="4">Plays important roles in virus replication, virulence and host range. Cooperates with host DDX56 to inhibit IRF3 nuclear translocation and subsequent type I interferon production.</text>
</comment>
<comment type="function">
    <molecule>Protein 3B-1</molecule>
    <text evidence="4">Covalently linked to the 5'-end of both the positive-strand and negative-strand genomic RNAs. Acts as a genome-linked replication primer.</text>
</comment>
<comment type="function">
    <molecule>Protein 3B-2</molecule>
    <text evidence="4">Covalently linked to the 5'-end of both the positive-strand and negative-strand genomic RNAs. Acts as a genome-linked replication primer.</text>
</comment>
<comment type="function">
    <molecule>Protein 3B-3</molecule>
    <text evidence="4">Covalently linked to the 5'-end of both the positive-strand and negative-strand genomic RNAs. Acts as a genome-linked replication primer.</text>
</comment>
<comment type="function">
    <molecule>Protease 3C</molecule>
    <text evidence="4">Cysteine protease that generates mature viral proteins from the precursor polyprotein. In addition to its proteolytic activity, binds to viral RNA and thus influences viral genome replication. RNA and substrate bind cooperatively to the protease.</text>
</comment>
<comment type="function">
    <text evidence="4">RNA-directed RNA polymerase 3D-POL replicates genomic and antigenomic RNA by recognizing replications specific signals. Covalently attaches UMP to a tyrosine of VPg, which is used to prime RNA synthesis. The positive stranded RNA genome is first replicated at virus induced membranous vesicles, creating a dsRNA genomic replication form. This dsRNA is then used as template to synthesize positive stranded RNA genomes. ss(+)RNA genomes are either translated, replicated or encapsidated.</text>
</comment>
<comment type="catalytic activity">
    <molecule>Leader protease</molecule>
    <reaction>
        <text>Autocatalytically cleaves itself from the polyprotein of the foot-and-mouth disease virus by hydrolysis of a Lys-|-Gly bond, but then cleaves host cell initiation factor eIF-4G at bonds -Gly-|-Arg- and -Lys-|-Arg-.</text>
        <dbReference type="EC" id="3.4.22.46"/>
    </reaction>
</comment>
<comment type="catalytic activity">
    <molecule>Protein 2C</molecule>
    <reaction evidence="4">
        <text>a ribonucleoside 5'-triphosphate + H2O = a ribonucleoside 5'-diphosphate + phosphate + H(+)</text>
        <dbReference type="Rhea" id="RHEA:23680"/>
        <dbReference type="ChEBI" id="CHEBI:15377"/>
        <dbReference type="ChEBI" id="CHEBI:15378"/>
        <dbReference type="ChEBI" id="CHEBI:43474"/>
        <dbReference type="ChEBI" id="CHEBI:57930"/>
        <dbReference type="ChEBI" id="CHEBI:61557"/>
        <dbReference type="EC" id="3.6.1.15"/>
    </reaction>
</comment>
<comment type="catalytic activity">
    <molecule>RNA-directed RNA polymerase 3D-POL</molecule>
    <reaction evidence="10">
        <text>RNA(n) + a ribonucleoside 5'-triphosphate = RNA(n+1) + diphosphate</text>
        <dbReference type="Rhea" id="RHEA:21248"/>
        <dbReference type="Rhea" id="RHEA-COMP:14527"/>
        <dbReference type="Rhea" id="RHEA-COMP:17342"/>
        <dbReference type="ChEBI" id="CHEBI:33019"/>
        <dbReference type="ChEBI" id="CHEBI:61557"/>
        <dbReference type="ChEBI" id="CHEBI:140395"/>
        <dbReference type="EC" id="2.7.7.48"/>
    </reaction>
</comment>
<comment type="catalytic activity">
    <molecule>Protease 3C</molecule>
    <reaction evidence="12">
        <text>Selective cleavage of Gln-|-Gly bond in the poliovirus polyprotein. In other picornavirus reactions Glu may be substituted for Gln, and Ser or Thr for Gly.</text>
        <dbReference type="EC" id="3.4.22.28"/>
    </reaction>
</comment>
<comment type="subunit">
    <molecule>Leader protease</molecule>
    <text evidence="4">Interacts with host ISG15.</text>
</comment>
<comment type="subunit">
    <molecule>Capsid protein VP1</molecule>
    <text evidence="4">Interacts (via R-G-D motif) with host ITGAV/ITGB6 (By similarity). Interacts with host MAVS; this interaction inhibits binding of host TRAF3 to MAVS, thereby suppressing interferon-mediated responses (By similarity).</text>
</comment>
<comment type="subunit">
    <molecule>Protein 2B</molecule>
    <text evidence="17">Forms homooligomers.</text>
</comment>
<comment type="subunit">
    <molecule>Protein 2C</molecule>
    <text evidence="4">Homohexamer. Interacts with host VIM. Interacts with host BECN1.</text>
</comment>
<comment type="subunit">
    <molecule>Protein 3A</molecule>
    <text evidence="4">Interacts with host DCTN3.</text>
</comment>
<comment type="subunit">
    <molecule>Protein 3B-1</molecule>
    <text evidence="7">Interacts with RNA-dependent RNA polymerase; this interaction allows 3B-1 to binds 2 polymerases and act as a primer. It also allows the recruitment of the RNA-dependent RNA polymerase to host membranes.</text>
</comment>
<comment type="subunit">
    <molecule>Protein 3B-2</molecule>
    <text evidence="7">Interacts with RNA-dependent RNA polymerase; this interaction allows 3B-2 to act as a primer.</text>
</comment>
<comment type="subunit">
    <molecule>Protein 3B-3</molecule>
    <text evidence="7">Interacts with RNA-dependent RNA polymerase; this interaction allows 3B-3 to act as a primer.</text>
</comment>
<comment type="subunit">
    <molecule>RNA-directed RNA polymerase 3D-POL</molecule>
    <text evidence="7">Interacts with 3B-1; this interaction allows 3B-1 to binds 2 polymerases and act as a primer. It also allows the recruitment of the RNA-dependent RNA polymerase to host membranes (By similarity). Interacts with 3B-2; this interaction allows 3B-2 to act as a primer (By similarity). Interacts with 3B-3; this interaction allows 3B-3 to act as a primer (By similarity).</text>
</comment>
<comment type="subcellular location">
    <molecule>Leader protease</molecule>
    <subcellularLocation>
        <location evidence="4">Host nucleus</location>
    </subcellularLocation>
    <subcellularLocation>
        <location evidence="4">Host cytoplasm</location>
    </subcellularLocation>
</comment>
<comment type="subcellular location">
    <molecule>Capsid protein VP3</molecule>
    <subcellularLocation>
        <location evidence="4">Virion</location>
    </subcellularLocation>
    <subcellularLocation>
        <location evidence="17">Host cytoplasm</location>
    </subcellularLocation>
</comment>
<comment type="subcellular location">
    <molecule>Capsid protein VP1</molecule>
    <subcellularLocation>
        <location evidence="4">Virion</location>
    </subcellularLocation>
    <subcellularLocation>
        <location evidence="17">Host cytoplasm</location>
    </subcellularLocation>
</comment>
<comment type="subcellular location">
    <molecule>Capsid protein VP2</molecule>
    <subcellularLocation>
        <location evidence="4">Virion</location>
    </subcellularLocation>
    <subcellularLocation>
        <location evidence="17">Host cytoplasm</location>
    </subcellularLocation>
</comment>
<comment type="subcellular location">
    <molecule>Protein 2B</molecule>
    <subcellularLocation>
        <location evidence="4">Host endoplasmic reticulum membrane</location>
    </subcellularLocation>
</comment>
<comment type="subcellular location">
    <molecule>Protein 2C</molecule>
    <subcellularLocation>
        <location evidence="17">Host cytoplasmic vesicle membrane</location>
        <topology evidence="17">Peripheral membrane protein</topology>
        <orientation evidence="17">Cytoplasmic side</orientation>
    </subcellularLocation>
    <text evidence="1">Probably localizes to the surface of intracellular membrane vesicles that are induced after virus infection as the site for viral RNA replication. These vesicles are derived from the endoplasmic reticulum (By similarity).</text>
</comment>
<comment type="subcellular location">
    <molecule>Protein 3A</molecule>
    <subcellularLocation>
        <location evidence="4">Host cytoplasm</location>
    </subcellularLocation>
    <subcellularLocation>
        <location evidence="4">Host endoplasmic reticulum membrane</location>
    </subcellularLocation>
    <text evidence="4">Interacts with host endoplasmic reticulum membranes through its hydrophobic stretch, while its N- and C-terminus face the cytosol being accessible to other viral proteins for viral replication.</text>
</comment>
<comment type="subcellular location">
    <molecule>Protein 3B-1</molecule>
    <subcellularLocation>
        <location evidence="17">Virion</location>
    </subcellularLocation>
</comment>
<comment type="subcellular location">
    <molecule>Protein 3B-2</molecule>
    <subcellularLocation>
        <location evidence="17">Virion</location>
    </subcellularLocation>
</comment>
<comment type="subcellular location">
    <molecule>Protein 3B-3</molecule>
    <subcellularLocation>
        <location evidence="17">Virion</location>
    </subcellularLocation>
</comment>
<comment type="subcellular location">
    <molecule>Protease 3C</molecule>
    <subcellularLocation>
        <location evidence="17">Host cytoplasm</location>
    </subcellularLocation>
</comment>
<comment type="subcellular location">
    <molecule>RNA-directed RNA polymerase 3D-POL</molecule>
    <subcellularLocation>
        <location evidence="4">Host cytoplasm</location>
    </subcellularLocation>
    <subcellularLocation>
        <location evidence="4">Host nucleus</location>
    </subcellularLocation>
</comment>
<comment type="PTM">
    <molecule>Genome polyprotein</molecule>
    <text evidence="4">Specific enzymatic cleavages in vivo by the viral proteases yield a variety of precursors and mature proteins. The polyprotein seems to be cotranslationally cleaved at the 2A/2B junction by a ribosomal skip from one codon to the next without formation of a peptide bond. This process would release the L-P1-2A peptide from the translational complex.</text>
</comment>
<comment type="PTM">
    <molecule>Capsid protein VP0</molecule>
    <text evidence="3">During virion maturation, immature virions are rendered infectious following cleavage of VP0 into VP4 and VP2. This maturation seems to be an autocatalytic event triggered by the presence of RNA in the capsid and is followed by a conformational change of the particle.</text>
</comment>
<comment type="PTM">
    <molecule>Capsid protein VP4</molecule>
    <text evidence="7">Myristoylation is required during RNA encapsidation and formation of the mature virus particle.</text>
</comment>
<comment type="PTM">
    <molecule>Protein 3B-1</molecule>
    <text evidence="4">Uridylylated by the polymerase and covalently linked to the 5'-end of genomic RNA. These uridylylated forms act as a nucleotide-peptide primer for the polymerase.</text>
</comment>
<comment type="PTM">
    <molecule>Protein 3B-2</molecule>
    <text evidence="4">Uridylylated by the polymerase and covalently linked to the 5'-end of genomic RNA. These uridylylated forms act as a nucleotide-peptide primer for the polymerase.</text>
</comment>
<comment type="PTM">
    <molecule>Protein 3B-3</molecule>
    <text evidence="4">Uridylylated by the polymerase and covalently linked to the 5'-end of genomic RNA. These uridylylated forms act as a nucleotide-peptide primer for the polymerase.</text>
</comment>
<comment type="miscellaneous">
    <text>The capsid protein VP1 contains the main antigenic determinants of the virion; therefore, changes in its sequence must be responsible for the high antigenic variability of the virus.</text>
</comment>
<comment type="similarity">
    <text evidence="17">Belongs to the picornaviruses polyprotein family.</text>
</comment>
<organism>
    <name type="scientific">Foot-and-mouth disease virus serotype Asia-1</name>
    <name type="common">FMDV</name>
    <dbReference type="NCBI Taxonomy" id="110195"/>
    <lineage>
        <taxon>Viruses</taxon>
        <taxon>Riboviria</taxon>
        <taxon>Orthornavirae</taxon>
        <taxon>Pisuviricota</taxon>
        <taxon>Pisoniviricetes</taxon>
        <taxon>Picornavirales</taxon>
        <taxon>Picornaviridae</taxon>
        <taxon>Caphthovirinae</taxon>
        <taxon>Aphthovirus</taxon>
        <taxon>Foot-and-mouth disease virus</taxon>
    </lineage>
</organism>
<accession>A2I7M2</accession>
<protein>
    <recommendedName>
        <fullName>Genome polyprotein</fullName>
    </recommendedName>
    <component>
        <recommendedName>
            <fullName>Leader protease</fullName>
            <shortName>Lpro</shortName>
            <ecNumber evidence="4">3.4.22.46</ecNumber>
        </recommendedName>
    </component>
    <component>
        <recommendedName>
            <fullName>Capsid protein VP0</fullName>
        </recommendedName>
        <alternativeName>
            <fullName>VP4-VP2</fullName>
        </alternativeName>
    </component>
    <component>
        <recommendedName>
            <fullName>Capsid protein VP4</fullName>
        </recommendedName>
        <alternativeName>
            <fullName>P1A</fullName>
        </alternativeName>
        <alternativeName>
            <fullName>Virion protein 4</fullName>
        </alternativeName>
    </component>
    <component>
        <recommendedName>
            <fullName>Capsid protein VP2</fullName>
        </recommendedName>
        <alternativeName>
            <fullName>P1B</fullName>
        </alternativeName>
        <alternativeName>
            <fullName>Virion protein 2</fullName>
        </alternativeName>
    </component>
    <component>
        <recommendedName>
            <fullName>Capsid protein VP3</fullName>
        </recommendedName>
        <alternativeName>
            <fullName>P1C</fullName>
        </alternativeName>
        <alternativeName>
            <fullName>Virion protein 3</fullName>
        </alternativeName>
    </component>
    <component>
        <recommendedName>
            <fullName>Capsid protein VP1</fullName>
        </recommendedName>
        <alternativeName>
            <fullName>P1D</fullName>
        </alternativeName>
        <alternativeName>
            <fullName>Virion protein 1</fullName>
        </alternativeName>
    </component>
    <component>
        <recommendedName>
            <fullName>Protein 2A</fullName>
            <shortName>P2A</shortName>
        </recommendedName>
        <alternativeName>
            <fullName>P52</fullName>
        </alternativeName>
    </component>
    <component>
        <recommendedName>
            <fullName>Protein 2B</fullName>
            <shortName>P2B</shortName>
        </recommendedName>
    </component>
    <component>
        <recommendedName>
            <fullName>Protein 2C</fullName>
            <shortName>P2C</shortName>
            <ecNumber evidence="4">3.6.1.15</ecNumber>
        </recommendedName>
    </component>
    <component>
        <recommendedName>
            <fullName>Protein 3A</fullName>
            <shortName>P3A</shortName>
        </recommendedName>
    </component>
    <component>
        <recommendedName>
            <fullName>Protein 3B-1</fullName>
            <shortName>P3B-1</shortName>
        </recommendedName>
        <alternativeName>
            <fullName>Genome-linked protein VPg1</fullName>
        </alternativeName>
    </component>
    <component>
        <recommendedName>
            <fullName>Protein 3B-2</fullName>
            <shortName>P3B-2</shortName>
        </recommendedName>
        <alternativeName>
            <fullName>Genome-linked protein VPg2</fullName>
        </alternativeName>
    </component>
    <component>
        <recommendedName>
            <fullName>Protein 3B-3</fullName>
            <shortName>P3B-3</shortName>
        </recommendedName>
        <alternativeName>
            <fullName>Genome-linked protein VPg3</fullName>
        </alternativeName>
    </component>
    <component>
        <recommendedName>
            <fullName>Protease 3C</fullName>
            <ecNumber evidence="12">3.4.22.28</ecNumber>
        </recommendedName>
        <alternativeName>
            <fullName>Picornain 3C</fullName>
            <shortName evidence="12">P3C</shortName>
        </alternativeName>
        <alternativeName>
            <fullName>Protease P20B</fullName>
        </alternativeName>
    </component>
    <component>
        <recommendedName>
            <fullName>RNA-directed RNA polymerase 3D-POL</fullName>
            <shortName>P3D-POL</shortName>
            <ecNumber evidence="10">2.7.7.48</ecNumber>
        </recommendedName>
        <alternativeName>
            <fullName>P56A</fullName>
        </alternativeName>
    </component>
</protein>
<proteinExistence type="evidence at protein level"/>